<proteinExistence type="inferred from homology"/>
<organism>
    <name type="scientific">Haemophilus influenzae (strain 86-028NP)</name>
    <dbReference type="NCBI Taxonomy" id="281310"/>
    <lineage>
        <taxon>Bacteria</taxon>
        <taxon>Pseudomonadati</taxon>
        <taxon>Pseudomonadota</taxon>
        <taxon>Gammaproteobacteria</taxon>
        <taxon>Pasteurellales</taxon>
        <taxon>Pasteurellaceae</taxon>
        <taxon>Haemophilus</taxon>
    </lineage>
</organism>
<reference key="1">
    <citation type="journal article" date="2005" name="J. Bacteriol.">
        <title>Genomic sequence of an otitis media isolate of nontypeable Haemophilus influenzae: comparative study with H. influenzae serotype d, strain KW20.</title>
        <authorList>
            <person name="Harrison A."/>
            <person name="Dyer D.W."/>
            <person name="Gillaspy A."/>
            <person name="Ray W.C."/>
            <person name="Mungur R."/>
            <person name="Carson M.B."/>
            <person name="Zhong H."/>
            <person name="Gipson J."/>
            <person name="Gipson M."/>
            <person name="Johnson L.S."/>
            <person name="Lewis L."/>
            <person name="Bakaletz L.O."/>
            <person name="Munson R.S. Jr."/>
        </authorList>
    </citation>
    <scope>NUCLEOTIDE SEQUENCE [LARGE SCALE GENOMIC DNA]</scope>
    <source>
        <strain>86-028NP</strain>
    </source>
</reference>
<evidence type="ECO:0000255" key="1">
    <source>
        <dbReference type="HAMAP-Rule" id="MF_01012"/>
    </source>
</evidence>
<name>RLMC_HAEI8</name>
<feature type="chain" id="PRO_0000282009" description="23S rRNA (uracil(747)-C(5))-methyltransferase RlmC">
    <location>
        <begin position="1"/>
        <end position="392"/>
    </location>
</feature>
<feature type="active site" description="Nucleophile" evidence="1">
    <location>
        <position position="348"/>
    </location>
</feature>
<feature type="binding site" evidence="1">
    <location>
        <position position="4"/>
    </location>
    <ligand>
        <name>[4Fe-4S] cluster</name>
        <dbReference type="ChEBI" id="CHEBI:49883"/>
    </ligand>
</feature>
<feature type="binding site" evidence="1">
    <location>
        <position position="12"/>
    </location>
    <ligand>
        <name>[4Fe-4S] cluster</name>
        <dbReference type="ChEBI" id="CHEBI:49883"/>
    </ligand>
</feature>
<feature type="binding site" evidence="1">
    <location>
        <position position="15"/>
    </location>
    <ligand>
        <name>[4Fe-4S] cluster</name>
        <dbReference type="ChEBI" id="CHEBI:49883"/>
    </ligand>
</feature>
<feature type="binding site" evidence="1">
    <location>
        <position position="93"/>
    </location>
    <ligand>
        <name>[4Fe-4S] cluster</name>
        <dbReference type="ChEBI" id="CHEBI:49883"/>
    </ligand>
</feature>
<feature type="binding site" evidence="1">
    <location>
        <position position="218"/>
    </location>
    <ligand>
        <name>S-adenosyl-L-methionine</name>
        <dbReference type="ChEBI" id="CHEBI:59789"/>
    </ligand>
</feature>
<feature type="binding site" evidence="1">
    <location>
        <position position="247"/>
    </location>
    <ligand>
        <name>S-adenosyl-L-methionine</name>
        <dbReference type="ChEBI" id="CHEBI:59789"/>
    </ligand>
</feature>
<feature type="binding site" evidence="1">
    <location>
        <position position="275"/>
    </location>
    <ligand>
        <name>S-adenosyl-L-methionine</name>
        <dbReference type="ChEBI" id="CHEBI:59789"/>
    </ligand>
</feature>
<feature type="binding site" evidence="1">
    <location>
        <position position="321"/>
    </location>
    <ligand>
        <name>S-adenosyl-L-methionine</name>
        <dbReference type="ChEBI" id="CHEBI:59789"/>
    </ligand>
</feature>
<protein>
    <recommendedName>
        <fullName evidence="1">23S rRNA (uracil(747)-C(5))-methyltransferase RlmC</fullName>
        <ecNumber evidence="1">2.1.1.189</ecNumber>
    </recommendedName>
    <alternativeName>
        <fullName evidence="1">23S rRNA(m5U747)-methyltransferase</fullName>
    </alternativeName>
</protein>
<accession>Q4QLU9</accession>
<keyword id="KW-0004">4Fe-4S</keyword>
<keyword id="KW-0408">Iron</keyword>
<keyword id="KW-0411">Iron-sulfur</keyword>
<keyword id="KW-0479">Metal-binding</keyword>
<keyword id="KW-0489">Methyltransferase</keyword>
<keyword id="KW-0698">rRNA processing</keyword>
<keyword id="KW-0949">S-adenosyl-L-methionine</keyword>
<keyword id="KW-0808">Transferase</keyword>
<dbReference type="EC" id="2.1.1.189" evidence="1"/>
<dbReference type="EMBL" id="CP000057">
    <property type="protein sequence ID" value="AAX87998.1"/>
    <property type="molecule type" value="Genomic_DNA"/>
</dbReference>
<dbReference type="RefSeq" id="WP_011272309.1">
    <property type="nucleotide sequence ID" value="NC_007146.2"/>
</dbReference>
<dbReference type="SMR" id="Q4QLU9"/>
<dbReference type="KEGG" id="hit:NTHI1131"/>
<dbReference type="HOGENOM" id="CLU_014689_0_0_6"/>
<dbReference type="Proteomes" id="UP000002525">
    <property type="component" value="Chromosome"/>
</dbReference>
<dbReference type="GO" id="GO:0051539">
    <property type="term" value="F:4 iron, 4 sulfur cluster binding"/>
    <property type="evidence" value="ECO:0007669"/>
    <property type="project" value="UniProtKB-KW"/>
</dbReference>
<dbReference type="GO" id="GO:0005506">
    <property type="term" value="F:iron ion binding"/>
    <property type="evidence" value="ECO:0007669"/>
    <property type="project" value="UniProtKB-UniRule"/>
</dbReference>
<dbReference type="GO" id="GO:0070041">
    <property type="term" value="F:rRNA (uridine-C5-)-methyltransferase activity"/>
    <property type="evidence" value="ECO:0007669"/>
    <property type="project" value="UniProtKB-UniRule"/>
</dbReference>
<dbReference type="GO" id="GO:0070475">
    <property type="term" value="P:rRNA base methylation"/>
    <property type="evidence" value="ECO:0007669"/>
    <property type="project" value="TreeGrafter"/>
</dbReference>
<dbReference type="CDD" id="cd02440">
    <property type="entry name" value="AdoMet_MTases"/>
    <property type="match status" value="1"/>
</dbReference>
<dbReference type="FunFam" id="2.40.50.1070:FF:000002">
    <property type="entry name" value="23S rRNA (uracil(747)-C(5))-methyltransferase RlmC"/>
    <property type="match status" value="1"/>
</dbReference>
<dbReference type="Gene3D" id="2.40.50.1070">
    <property type="match status" value="1"/>
</dbReference>
<dbReference type="Gene3D" id="3.40.50.150">
    <property type="entry name" value="Vaccinia Virus protein VP39"/>
    <property type="match status" value="1"/>
</dbReference>
<dbReference type="HAMAP" id="MF_01012">
    <property type="entry name" value="23SrRNA_methyltr_RlmC"/>
    <property type="match status" value="1"/>
</dbReference>
<dbReference type="InterPro" id="IPR011825">
    <property type="entry name" value="23SrRNA_MeTrfase_RlmC"/>
</dbReference>
<dbReference type="InterPro" id="IPR030390">
    <property type="entry name" value="MeTrfase_TrmA_AS"/>
</dbReference>
<dbReference type="InterPro" id="IPR030391">
    <property type="entry name" value="MeTrfase_TrmA_CS"/>
</dbReference>
<dbReference type="InterPro" id="IPR029063">
    <property type="entry name" value="SAM-dependent_MTases_sf"/>
</dbReference>
<dbReference type="InterPro" id="IPR010280">
    <property type="entry name" value="U5_MeTrfase_fam"/>
</dbReference>
<dbReference type="NCBIfam" id="TIGR02085">
    <property type="entry name" value="meth_trns_rumB"/>
    <property type="match status" value="1"/>
</dbReference>
<dbReference type="PANTHER" id="PTHR11061">
    <property type="entry name" value="RNA M5U METHYLTRANSFERASE"/>
    <property type="match status" value="1"/>
</dbReference>
<dbReference type="PANTHER" id="PTHR11061:SF30">
    <property type="entry name" value="TRNA (URACIL(54)-C(5))-METHYLTRANSFERASE"/>
    <property type="match status" value="1"/>
</dbReference>
<dbReference type="Pfam" id="PF05958">
    <property type="entry name" value="tRNA_U5-meth_tr"/>
    <property type="match status" value="1"/>
</dbReference>
<dbReference type="SUPFAM" id="SSF53335">
    <property type="entry name" value="S-adenosyl-L-methionine-dependent methyltransferases"/>
    <property type="match status" value="1"/>
</dbReference>
<dbReference type="PROSITE" id="PS51687">
    <property type="entry name" value="SAM_MT_RNA_M5U"/>
    <property type="match status" value="1"/>
</dbReference>
<dbReference type="PROSITE" id="PS01230">
    <property type="entry name" value="TRMA_1"/>
    <property type="match status" value="1"/>
</dbReference>
<dbReference type="PROSITE" id="PS01231">
    <property type="entry name" value="TRMA_2"/>
    <property type="match status" value="1"/>
</dbReference>
<sequence>MIDCRYYQQNECRSCQWLEIPYSQQLAEKQHHLKQQLISINCDKAQWLAPFQSNEQCFRNKAKMLVSGSVERPILGILKNPNDPQSAIDLCDCPLYPARFSIIFSILKDFIGRAGLVPYNIAKQKGELKYILLTESIATGKLMLRFVLRTENKLPLIRRELPKLLEKLPHLEVVSVNLQPLHAAILEGEQEIFLTEQQFLPENFNSIPLFIRPQGFFQTNPKVAEGLYATAQQWVSELPIYNLWDLFCGVGGFGLHCAKALQEKWGKPIKLTGIEISSSAILAASHSAKILGLEHVNFQSLDAASVIENKNENKPDLVIVNPPRRGIGKELSEFLNQIQPHFILYSSCNAMTMGKDLQHLTCYKPLKIQLFDMFPQTSHYEVLVLLERKKIN</sequence>
<comment type="function">
    <text evidence="1">Catalyzes the formation of 5-methyl-uridine at position 747 (m5U747) in 23S rRNA.</text>
</comment>
<comment type="catalytic activity">
    <reaction evidence="1">
        <text>uridine(747) in 23S rRNA + S-adenosyl-L-methionine = 5-methyluridine(747) in 23S rRNA + S-adenosyl-L-homocysteine + H(+)</text>
        <dbReference type="Rhea" id="RHEA:42628"/>
        <dbReference type="Rhea" id="RHEA-COMP:10154"/>
        <dbReference type="Rhea" id="RHEA-COMP:10155"/>
        <dbReference type="ChEBI" id="CHEBI:15378"/>
        <dbReference type="ChEBI" id="CHEBI:57856"/>
        <dbReference type="ChEBI" id="CHEBI:59789"/>
        <dbReference type="ChEBI" id="CHEBI:65315"/>
        <dbReference type="ChEBI" id="CHEBI:74447"/>
        <dbReference type="EC" id="2.1.1.189"/>
    </reaction>
</comment>
<comment type="similarity">
    <text evidence="1">Belongs to the class I-like SAM-binding methyltransferase superfamily. RNA M5U methyltransferase family. RlmC subfamily.</text>
</comment>
<gene>
    <name evidence="1" type="primary">rlmC</name>
    <name type="synonym">rumB</name>
    <name type="ordered locus">NTHI1131</name>
</gene>